<comment type="subunit">
    <text evidence="1">Part of the 50S ribosomal subunit.</text>
</comment>
<comment type="similarity">
    <text evidence="1">Belongs to the universal ribosomal protein uL30 family.</text>
</comment>
<keyword id="KW-0687">Ribonucleoprotein</keyword>
<keyword id="KW-0689">Ribosomal protein</keyword>
<protein>
    <recommendedName>
        <fullName evidence="1">Large ribosomal subunit protein uL30</fullName>
    </recommendedName>
    <alternativeName>
        <fullName evidence="2">50S ribosomal protein L30</fullName>
    </alternativeName>
</protein>
<accession>Q2FEQ7</accession>
<proteinExistence type="inferred from homology"/>
<name>RL30_STAA3</name>
<evidence type="ECO:0000255" key="1">
    <source>
        <dbReference type="HAMAP-Rule" id="MF_01371"/>
    </source>
</evidence>
<evidence type="ECO:0000305" key="2"/>
<gene>
    <name evidence="1" type="primary">rpmD</name>
    <name type="ordered locus">SAUSA300_2186</name>
</gene>
<feature type="chain" id="PRO_1000056112" description="Large ribosomal subunit protein uL30">
    <location>
        <begin position="1"/>
        <end position="59"/>
    </location>
</feature>
<reference key="1">
    <citation type="journal article" date="2006" name="Lancet">
        <title>Complete genome sequence of USA300, an epidemic clone of community-acquired meticillin-resistant Staphylococcus aureus.</title>
        <authorList>
            <person name="Diep B.A."/>
            <person name="Gill S.R."/>
            <person name="Chang R.F."/>
            <person name="Phan T.H."/>
            <person name="Chen J.H."/>
            <person name="Davidson M.G."/>
            <person name="Lin F."/>
            <person name="Lin J."/>
            <person name="Carleton H.A."/>
            <person name="Mongodin E.F."/>
            <person name="Sensabaugh G.F."/>
            <person name="Perdreau-Remington F."/>
        </authorList>
    </citation>
    <scope>NUCLEOTIDE SEQUENCE [LARGE SCALE GENOMIC DNA]</scope>
    <source>
        <strain>USA300</strain>
    </source>
</reference>
<sequence>MAKLQITLTRSVIGRPETQRKTVEALGLKKTNSSVVVEDNPAIRGQINKVKHLVTVEEK</sequence>
<organism>
    <name type="scientific">Staphylococcus aureus (strain USA300)</name>
    <dbReference type="NCBI Taxonomy" id="367830"/>
    <lineage>
        <taxon>Bacteria</taxon>
        <taxon>Bacillati</taxon>
        <taxon>Bacillota</taxon>
        <taxon>Bacilli</taxon>
        <taxon>Bacillales</taxon>
        <taxon>Staphylococcaceae</taxon>
        <taxon>Staphylococcus</taxon>
    </lineage>
</organism>
<dbReference type="EMBL" id="CP000255">
    <property type="protein sequence ID" value="ABD22555.1"/>
    <property type="molecule type" value="Genomic_DNA"/>
</dbReference>
<dbReference type="RefSeq" id="WP_001096577.1">
    <property type="nucleotide sequence ID" value="NZ_CP027476.1"/>
</dbReference>
<dbReference type="SMR" id="Q2FEQ7"/>
<dbReference type="KEGG" id="saa:SAUSA300_2186"/>
<dbReference type="HOGENOM" id="CLU_131047_2_1_9"/>
<dbReference type="OMA" id="KMHKTRE"/>
<dbReference type="Proteomes" id="UP000001939">
    <property type="component" value="Chromosome"/>
</dbReference>
<dbReference type="GO" id="GO:0022625">
    <property type="term" value="C:cytosolic large ribosomal subunit"/>
    <property type="evidence" value="ECO:0007669"/>
    <property type="project" value="TreeGrafter"/>
</dbReference>
<dbReference type="GO" id="GO:0003735">
    <property type="term" value="F:structural constituent of ribosome"/>
    <property type="evidence" value="ECO:0007669"/>
    <property type="project" value="InterPro"/>
</dbReference>
<dbReference type="GO" id="GO:0006412">
    <property type="term" value="P:translation"/>
    <property type="evidence" value="ECO:0007669"/>
    <property type="project" value="UniProtKB-UniRule"/>
</dbReference>
<dbReference type="CDD" id="cd01658">
    <property type="entry name" value="Ribosomal_L30"/>
    <property type="match status" value="1"/>
</dbReference>
<dbReference type="FunFam" id="3.30.1390.20:FF:000001">
    <property type="entry name" value="50S ribosomal protein L30"/>
    <property type="match status" value="1"/>
</dbReference>
<dbReference type="Gene3D" id="3.30.1390.20">
    <property type="entry name" value="Ribosomal protein L30, ferredoxin-like fold domain"/>
    <property type="match status" value="1"/>
</dbReference>
<dbReference type="HAMAP" id="MF_01371_B">
    <property type="entry name" value="Ribosomal_uL30_B"/>
    <property type="match status" value="1"/>
</dbReference>
<dbReference type="InterPro" id="IPR036919">
    <property type="entry name" value="Ribo_uL30_ferredoxin-like_sf"/>
</dbReference>
<dbReference type="InterPro" id="IPR005996">
    <property type="entry name" value="Ribosomal_uL30_bac-type"/>
</dbReference>
<dbReference type="InterPro" id="IPR016082">
    <property type="entry name" value="Ribosomal_uL30_ferredoxin-like"/>
</dbReference>
<dbReference type="NCBIfam" id="TIGR01308">
    <property type="entry name" value="rpmD_bact"/>
    <property type="match status" value="1"/>
</dbReference>
<dbReference type="PANTHER" id="PTHR15892:SF2">
    <property type="entry name" value="LARGE RIBOSOMAL SUBUNIT PROTEIN UL30M"/>
    <property type="match status" value="1"/>
</dbReference>
<dbReference type="PANTHER" id="PTHR15892">
    <property type="entry name" value="MITOCHONDRIAL RIBOSOMAL PROTEIN L30"/>
    <property type="match status" value="1"/>
</dbReference>
<dbReference type="Pfam" id="PF00327">
    <property type="entry name" value="Ribosomal_L30"/>
    <property type="match status" value="1"/>
</dbReference>
<dbReference type="PIRSF" id="PIRSF002211">
    <property type="entry name" value="Ribosomal_L30_bac-type"/>
    <property type="match status" value="1"/>
</dbReference>
<dbReference type="SUPFAM" id="SSF55129">
    <property type="entry name" value="Ribosomal protein L30p/L7e"/>
    <property type="match status" value="1"/>
</dbReference>